<proteinExistence type="inferred from homology"/>
<protein>
    <recommendedName>
        <fullName evidence="1">GTPase Obg</fullName>
        <ecNumber evidence="1">3.6.5.-</ecNumber>
    </recommendedName>
    <alternativeName>
        <fullName evidence="1">GTP-binding protein Obg</fullName>
    </alternativeName>
</protein>
<gene>
    <name evidence="1" type="primary">obg</name>
    <name type="ordered locus">OB2042</name>
</gene>
<reference key="1">
    <citation type="journal article" date="2002" name="Nucleic Acids Res.">
        <title>Genome sequence of Oceanobacillus iheyensis isolated from the Iheya Ridge and its unexpected adaptive capabilities to extreme environments.</title>
        <authorList>
            <person name="Takami H."/>
            <person name="Takaki Y."/>
            <person name="Uchiyama I."/>
        </authorList>
    </citation>
    <scope>NUCLEOTIDE SEQUENCE [LARGE SCALE GENOMIC DNA]</scope>
    <source>
        <strain>DSM 14371 / CIP 107618 / JCM 11309 / KCTC 3954 / HTE831</strain>
    </source>
</reference>
<accession>Q8EPQ0</accession>
<dbReference type="EC" id="3.6.5.-" evidence="1"/>
<dbReference type="EMBL" id="BA000028">
    <property type="protein sequence ID" value="BAC13998.1"/>
    <property type="molecule type" value="Genomic_DNA"/>
</dbReference>
<dbReference type="RefSeq" id="WP_011066437.1">
    <property type="nucleotide sequence ID" value="NC_004193.1"/>
</dbReference>
<dbReference type="SMR" id="Q8EPQ0"/>
<dbReference type="STRING" id="221109.gene:10734288"/>
<dbReference type="KEGG" id="oih:OB2042"/>
<dbReference type="eggNOG" id="COG0536">
    <property type="taxonomic scope" value="Bacteria"/>
</dbReference>
<dbReference type="HOGENOM" id="CLU_011747_2_1_9"/>
<dbReference type="OrthoDB" id="9807318at2"/>
<dbReference type="PhylomeDB" id="Q8EPQ0"/>
<dbReference type="Proteomes" id="UP000000822">
    <property type="component" value="Chromosome"/>
</dbReference>
<dbReference type="GO" id="GO:0005737">
    <property type="term" value="C:cytoplasm"/>
    <property type="evidence" value="ECO:0007669"/>
    <property type="project" value="UniProtKB-SubCell"/>
</dbReference>
<dbReference type="GO" id="GO:0005525">
    <property type="term" value="F:GTP binding"/>
    <property type="evidence" value="ECO:0007669"/>
    <property type="project" value="UniProtKB-UniRule"/>
</dbReference>
<dbReference type="GO" id="GO:0003924">
    <property type="term" value="F:GTPase activity"/>
    <property type="evidence" value="ECO:0007669"/>
    <property type="project" value="UniProtKB-UniRule"/>
</dbReference>
<dbReference type="GO" id="GO:0000287">
    <property type="term" value="F:magnesium ion binding"/>
    <property type="evidence" value="ECO:0007669"/>
    <property type="project" value="InterPro"/>
</dbReference>
<dbReference type="GO" id="GO:0042254">
    <property type="term" value="P:ribosome biogenesis"/>
    <property type="evidence" value="ECO:0007669"/>
    <property type="project" value="UniProtKB-UniRule"/>
</dbReference>
<dbReference type="CDD" id="cd01898">
    <property type="entry name" value="Obg"/>
    <property type="match status" value="1"/>
</dbReference>
<dbReference type="FunFam" id="2.70.210.12:FF:000001">
    <property type="entry name" value="GTPase Obg"/>
    <property type="match status" value="1"/>
</dbReference>
<dbReference type="FunFam" id="3.40.50.300:FF:000515">
    <property type="entry name" value="GTPase Obg"/>
    <property type="match status" value="1"/>
</dbReference>
<dbReference type="Gene3D" id="3.30.300.350">
    <property type="entry name" value="GTP-binding protein OBG, C-terminal domain"/>
    <property type="match status" value="1"/>
</dbReference>
<dbReference type="Gene3D" id="2.70.210.12">
    <property type="entry name" value="GTP1/OBG domain"/>
    <property type="match status" value="1"/>
</dbReference>
<dbReference type="Gene3D" id="3.40.50.300">
    <property type="entry name" value="P-loop containing nucleotide triphosphate hydrolases"/>
    <property type="match status" value="1"/>
</dbReference>
<dbReference type="HAMAP" id="MF_01454">
    <property type="entry name" value="GTPase_Obg"/>
    <property type="match status" value="1"/>
</dbReference>
<dbReference type="InterPro" id="IPR031167">
    <property type="entry name" value="G_OBG"/>
</dbReference>
<dbReference type="InterPro" id="IPR006073">
    <property type="entry name" value="GTP-bd"/>
</dbReference>
<dbReference type="InterPro" id="IPR014100">
    <property type="entry name" value="GTP-bd_Obg/CgtA"/>
</dbReference>
<dbReference type="InterPro" id="IPR036346">
    <property type="entry name" value="GTP-bd_prot_GTP1/OBG_C_sf"/>
</dbReference>
<dbReference type="InterPro" id="IPR006074">
    <property type="entry name" value="GTP1-OBG_CS"/>
</dbReference>
<dbReference type="InterPro" id="IPR006169">
    <property type="entry name" value="GTP1_OBG_dom"/>
</dbReference>
<dbReference type="InterPro" id="IPR036726">
    <property type="entry name" value="GTP1_OBG_dom_sf"/>
</dbReference>
<dbReference type="InterPro" id="IPR045086">
    <property type="entry name" value="OBG_GTPase"/>
</dbReference>
<dbReference type="InterPro" id="IPR015349">
    <property type="entry name" value="OCT_dom"/>
</dbReference>
<dbReference type="InterPro" id="IPR027417">
    <property type="entry name" value="P-loop_NTPase"/>
</dbReference>
<dbReference type="NCBIfam" id="TIGR02729">
    <property type="entry name" value="Obg_CgtA"/>
    <property type="match status" value="1"/>
</dbReference>
<dbReference type="NCBIfam" id="TIGR03595">
    <property type="entry name" value="Obg_CgtA_exten"/>
    <property type="match status" value="1"/>
</dbReference>
<dbReference type="NCBIfam" id="NF008954">
    <property type="entry name" value="PRK12296.1"/>
    <property type="match status" value="1"/>
</dbReference>
<dbReference type="NCBIfam" id="NF008955">
    <property type="entry name" value="PRK12297.1"/>
    <property type="match status" value="1"/>
</dbReference>
<dbReference type="NCBIfam" id="NF008956">
    <property type="entry name" value="PRK12299.1"/>
    <property type="match status" value="1"/>
</dbReference>
<dbReference type="PANTHER" id="PTHR11702">
    <property type="entry name" value="DEVELOPMENTALLY REGULATED GTP-BINDING PROTEIN-RELATED"/>
    <property type="match status" value="1"/>
</dbReference>
<dbReference type="PANTHER" id="PTHR11702:SF31">
    <property type="entry name" value="MITOCHONDRIAL RIBOSOME-ASSOCIATED GTPASE 2"/>
    <property type="match status" value="1"/>
</dbReference>
<dbReference type="Pfam" id="PF09269">
    <property type="entry name" value="DUF1967"/>
    <property type="match status" value="1"/>
</dbReference>
<dbReference type="Pfam" id="PF01018">
    <property type="entry name" value="GTP1_OBG"/>
    <property type="match status" value="1"/>
</dbReference>
<dbReference type="Pfam" id="PF01926">
    <property type="entry name" value="MMR_HSR1"/>
    <property type="match status" value="1"/>
</dbReference>
<dbReference type="PIRSF" id="PIRSF002401">
    <property type="entry name" value="GTP_bd_Obg/CgtA"/>
    <property type="match status" value="1"/>
</dbReference>
<dbReference type="PRINTS" id="PR00326">
    <property type="entry name" value="GTP1OBG"/>
</dbReference>
<dbReference type="SUPFAM" id="SSF102741">
    <property type="entry name" value="Obg GTP-binding protein C-terminal domain"/>
    <property type="match status" value="1"/>
</dbReference>
<dbReference type="SUPFAM" id="SSF82051">
    <property type="entry name" value="Obg GTP-binding protein N-terminal domain"/>
    <property type="match status" value="1"/>
</dbReference>
<dbReference type="SUPFAM" id="SSF52540">
    <property type="entry name" value="P-loop containing nucleoside triphosphate hydrolases"/>
    <property type="match status" value="1"/>
</dbReference>
<dbReference type="PROSITE" id="PS51710">
    <property type="entry name" value="G_OBG"/>
    <property type="match status" value="1"/>
</dbReference>
<dbReference type="PROSITE" id="PS00905">
    <property type="entry name" value="GTP1_OBG"/>
    <property type="match status" value="1"/>
</dbReference>
<dbReference type="PROSITE" id="PS51883">
    <property type="entry name" value="OBG"/>
    <property type="match status" value="1"/>
</dbReference>
<dbReference type="PROSITE" id="PS51881">
    <property type="entry name" value="OCT"/>
    <property type="match status" value="1"/>
</dbReference>
<organism>
    <name type="scientific">Oceanobacillus iheyensis (strain DSM 14371 / CIP 107618 / JCM 11309 / KCTC 3954 / HTE831)</name>
    <dbReference type="NCBI Taxonomy" id="221109"/>
    <lineage>
        <taxon>Bacteria</taxon>
        <taxon>Bacillati</taxon>
        <taxon>Bacillota</taxon>
        <taxon>Bacilli</taxon>
        <taxon>Bacillales</taxon>
        <taxon>Bacillaceae</taxon>
        <taxon>Oceanobacillus</taxon>
    </lineage>
</organism>
<comment type="function">
    <text evidence="1">An essential GTPase which binds GTP, GDP and possibly (p)ppGpp with moderate affinity, with high nucleotide exchange rates and a fairly low GTP hydrolysis rate. Plays a role in control of the cell cycle, stress response, ribosome biogenesis and in those bacteria that undergo differentiation, in morphogenesis control.</text>
</comment>
<comment type="cofactor">
    <cofactor evidence="1">
        <name>Mg(2+)</name>
        <dbReference type="ChEBI" id="CHEBI:18420"/>
    </cofactor>
</comment>
<comment type="subunit">
    <text evidence="1">Monomer.</text>
</comment>
<comment type="subcellular location">
    <subcellularLocation>
        <location evidence="1">Cytoplasm</location>
    </subcellularLocation>
</comment>
<comment type="similarity">
    <text evidence="1">Belongs to the TRAFAC class OBG-HflX-like GTPase superfamily. OBG GTPase family.</text>
</comment>
<feature type="chain" id="PRO_0000386099" description="GTPase Obg">
    <location>
        <begin position="1"/>
        <end position="426"/>
    </location>
</feature>
<feature type="domain" description="Obg" evidence="3">
    <location>
        <begin position="1"/>
        <end position="158"/>
    </location>
</feature>
<feature type="domain" description="OBG-type G" evidence="1">
    <location>
        <begin position="159"/>
        <end position="329"/>
    </location>
</feature>
<feature type="domain" description="OCT" evidence="2">
    <location>
        <begin position="348"/>
        <end position="426"/>
    </location>
</feature>
<feature type="region of interest" description="Disordered" evidence="4">
    <location>
        <begin position="66"/>
        <end position="86"/>
    </location>
</feature>
<feature type="region of interest" description="Disordered" evidence="4">
    <location>
        <begin position="119"/>
        <end position="146"/>
    </location>
</feature>
<feature type="binding site" evidence="1">
    <location>
        <begin position="165"/>
        <end position="172"/>
    </location>
    <ligand>
        <name>GTP</name>
        <dbReference type="ChEBI" id="CHEBI:37565"/>
    </ligand>
</feature>
<feature type="binding site" evidence="1">
    <location>
        <position position="172"/>
    </location>
    <ligand>
        <name>Mg(2+)</name>
        <dbReference type="ChEBI" id="CHEBI:18420"/>
    </ligand>
</feature>
<feature type="binding site" evidence="1">
    <location>
        <begin position="190"/>
        <end position="194"/>
    </location>
    <ligand>
        <name>GTP</name>
        <dbReference type="ChEBI" id="CHEBI:37565"/>
    </ligand>
</feature>
<feature type="binding site" evidence="1">
    <location>
        <position position="192"/>
    </location>
    <ligand>
        <name>Mg(2+)</name>
        <dbReference type="ChEBI" id="CHEBI:18420"/>
    </ligand>
</feature>
<feature type="binding site" evidence="1">
    <location>
        <begin position="212"/>
        <end position="215"/>
    </location>
    <ligand>
        <name>GTP</name>
        <dbReference type="ChEBI" id="CHEBI:37565"/>
    </ligand>
</feature>
<feature type="binding site" evidence="1">
    <location>
        <begin position="282"/>
        <end position="285"/>
    </location>
    <ligand>
        <name>GTP</name>
        <dbReference type="ChEBI" id="CHEBI:37565"/>
    </ligand>
</feature>
<feature type="binding site" evidence="1">
    <location>
        <begin position="310"/>
        <end position="312"/>
    </location>
    <ligand>
        <name>GTP</name>
        <dbReference type="ChEBI" id="CHEBI:37565"/>
    </ligand>
</feature>
<evidence type="ECO:0000255" key="1">
    <source>
        <dbReference type="HAMAP-Rule" id="MF_01454"/>
    </source>
</evidence>
<evidence type="ECO:0000255" key="2">
    <source>
        <dbReference type="PROSITE-ProRule" id="PRU01229"/>
    </source>
</evidence>
<evidence type="ECO:0000255" key="3">
    <source>
        <dbReference type="PROSITE-ProRule" id="PRU01231"/>
    </source>
</evidence>
<evidence type="ECO:0000256" key="4">
    <source>
        <dbReference type="SAM" id="MobiDB-lite"/>
    </source>
</evidence>
<keyword id="KW-0963">Cytoplasm</keyword>
<keyword id="KW-0342">GTP-binding</keyword>
<keyword id="KW-0378">Hydrolase</keyword>
<keyword id="KW-0460">Magnesium</keyword>
<keyword id="KW-0479">Metal-binding</keyword>
<keyword id="KW-0547">Nucleotide-binding</keyword>
<keyword id="KW-1185">Reference proteome</keyword>
<name>OBG_OCEIH</name>
<sequence>MFVDQVSVYVKAGDGGNGLVAYRREKYVPKGGPAGGDGGNGSNVVFKVDEGLNTLMEFRYNRHFKGKRGENGMSKTQHGRNADPLVIPVPPGTTVIDEDTGEVIADLTKHEQEAVIVKGGRGGRGNTRFATPRNPAPDMAENGEPGQERNIKVELKLIADVGLVGFPSVGKSTLLSVVSAAKPKIADYHFTTLSPNLGVVDTQDSRSFVLADLPGLIEGASQGIGLGHQFLRHIERTRVILHVIDMAGTEGRDPYEDYKKINQELSDYDEKLMDRPQIIAANKMDMPNAQENLIQFKNELEDDIPVYEISALTKDGLRDLLFAIADKLETIPKYEKELEETDDTVVYRYQKEEDPFHITRDPDGAFVLYGQRIEKLFKMTDFQHDEAVQRFARQLRGMGVDKALREKGAQDGDVVRLLEYEFEFIE</sequence>